<comment type="function">
    <text evidence="1">Catalyzes the synthesis of alpha-ribazole-5'-phosphate from nicotinate mononucleotide (NAMN) and 5,6-dimethylbenzimidazole (DMB).</text>
</comment>
<comment type="catalytic activity">
    <reaction evidence="1">
        <text>5,6-dimethylbenzimidazole + nicotinate beta-D-ribonucleotide = alpha-ribazole 5'-phosphate + nicotinate + H(+)</text>
        <dbReference type="Rhea" id="RHEA:11196"/>
        <dbReference type="ChEBI" id="CHEBI:15378"/>
        <dbReference type="ChEBI" id="CHEBI:15890"/>
        <dbReference type="ChEBI" id="CHEBI:32544"/>
        <dbReference type="ChEBI" id="CHEBI:57502"/>
        <dbReference type="ChEBI" id="CHEBI:57918"/>
        <dbReference type="EC" id="2.4.2.21"/>
    </reaction>
</comment>
<comment type="pathway">
    <text evidence="1">Nucleoside biosynthesis; alpha-ribazole biosynthesis; alpha-ribazole from 5,6-dimethylbenzimidazole: step 1/2.</text>
</comment>
<comment type="similarity">
    <text evidence="1">Belongs to the CobT family.</text>
</comment>
<proteinExistence type="inferred from homology"/>
<accession>A0L0D3</accession>
<reference key="1">
    <citation type="submission" date="2006-09" db="EMBL/GenBank/DDBJ databases">
        <title>Complete sequence of chromosome 1 of Shewanella sp. ANA-3.</title>
        <authorList>
            <person name="Copeland A."/>
            <person name="Lucas S."/>
            <person name="Lapidus A."/>
            <person name="Barry K."/>
            <person name="Detter J.C."/>
            <person name="Glavina del Rio T."/>
            <person name="Hammon N."/>
            <person name="Israni S."/>
            <person name="Dalin E."/>
            <person name="Tice H."/>
            <person name="Pitluck S."/>
            <person name="Chertkov O."/>
            <person name="Brettin T."/>
            <person name="Bruce D."/>
            <person name="Han C."/>
            <person name="Tapia R."/>
            <person name="Gilna P."/>
            <person name="Schmutz J."/>
            <person name="Larimer F."/>
            <person name="Land M."/>
            <person name="Hauser L."/>
            <person name="Kyrpides N."/>
            <person name="Kim E."/>
            <person name="Newman D."/>
            <person name="Salticov C."/>
            <person name="Konstantinidis K."/>
            <person name="Klappenback J."/>
            <person name="Tiedje J."/>
            <person name="Richardson P."/>
        </authorList>
    </citation>
    <scope>NUCLEOTIDE SEQUENCE [LARGE SCALE GENOMIC DNA]</scope>
    <source>
        <strain>ANA-3</strain>
    </source>
</reference>
<dbReference type="EC" id="2.4.2.21" evidence="1"/>
<dbReference type="EMBL" id="CP000469">
    <property type="protein sequence ID" value="ABK49502.1"/>
    <property type="molecule type" value="Genomic_DNA"/>
</dbReference>
<dbReference type="RefSeq" id="WP_011718085.1">
    <property type="nucleotide sequence ID" value="NC_008577.1"/>
</dbReference>
<dbReference type="SMR" id="A0L0D3"/>
<dbReference type="STRING" id="94122.Shewana3_3278"/>
<dbReference type="KEGG" id="shn:Shewana3_3278"/>
<dbReference type="eggNOG" id="COG2038">
    <property type="taxonomic scope" value="Bacteria"/>
</dbReference>
<dbReference type="HOGENOM" id="CLU_002982_0_0_6"/>
<dbReference type="OrthoDB" id="9781491at2"/>
<dbReference type="UniPathway" id="UPA00061">
    <property type="reaction ID" value="UER00516"/>
</dbReference>
<dbReference type="Proteomes" id="UP000002589">
    <property type="component" value="Chromosome"/>
</dbReference>
<dbReference type="GO" id="GO:0008939">
    <property type="term" value="F:nicotinate-nucleotide-dimethylbenzimidazole phosphoribosyltransferase activity"/>
    <property type="evidence" value="ECO:0007669"/>
    <property type="project" value="UniProtKB-UniRule"/>
</dbReference>
<dbReference type="GO" id="GO:0009236">
    <property type="term" value="P:cobalamin biosynthetic process"/>
    <property type="evidence" value="ECO:0007669"/>
    <property type="project" value="UniProtKB-KW"/>
</dbReference>
<dbReference type="CDD" id="cd02439">
    <property type="entry name" value="DMB-PRT_CobT"/>
    <property type="match status" value="1"/>
</dbReference>
<dbReference type="FunFam" id="3.40.50.10210:FF:000001">
    <property type="entry name" value="Nicotinate-nucleotide--dimethylbenzimidazole phosphoribosyltransferase"/>
    <property type="match status" value="1"/>
</dbReference>
<dbReference type="Gene3D" id="1.10.1610.10">
    <property type="match status" value="1"/>
</dbReference>
<dbReference type="Gene3D" id="3.40.50.10210">
    <property type="match status" value="1"/>
</dbReference>
<dbReference type="HAMAP" id="MF_00230">
    <property type="entry name" value="CobT"/>
    <property type="match status" value="1"/>
</dbReference>
<dbReference type="InterPro" id="IPR003200">
    <property type="entry name" value="Nict_dMeBzImd_PRibTrfase"/>
</dbReference>
<dbReference type="InterPro" id="IPR017846">
    <property type="entry name" value="Nict_dMeBzImd_PRibTrfase_bact"/>
</dbReference>
<dbReference type="InterPro" id="IPR023195">
    <property type="entry name" value="Nict_dMeBzImd_PRibTrfase_N"/>
</dbReference>
<dbReference type="InterPro" id="IPR036087">
    <property type="entry name" value="Nict_dMeBzImd_PRibTrfase_sf"/>
</dbReference>
<dbReference type="NCBIfam" id="TIGR03160">
    <property type="entry name" value="cobT_DBIPRT"/>
    <property type="match status" value="1"/>
</dbReference>
<dbReference type="NCBIfam" id="NF000996">
    <property type="entry name" value="PRK00105.1"/>
    <property type="match status" value="1"/>
</dbReference>
<dbReference type="PANTHER" id="PTHR43463">
    <property type="entry name" value="NICOTINATE-NUCLEOTIDE--DIMETHYLBENZIMIDAZOLE PHOSPHORIBOSYLTRANSFERASE"/>
    <property type="match status" value="1"/>
</dbReference>
<dbReference type="PANTHER" id="PTHR43463:SF1">
    <property type="entry name" value="NICOTINATE-NUCLEOTIDE--DIMETHYLBENZIMIDAZOLE PHOSPHORIBOSYLTRANSFERASE"/>
    <property type="match status" value="1"/>
</dbReference>
<dbReference type="Pfam" id="PF02277">
    <property type="entry name" value="DBI_PRT"/>
    <property type="match status" value="1"/>
</dbReference>
<dbReference type="SUPFAM" id="SSF52733">
    <property type="entry name" value="Nicotinate mononucleotide:5,6-dimethylbenzimidazole phosphoribosyltransferase (CobT)"/>
    <property type="match status" value="1"/>
</dbReference>
<keyword id="KW-0169">Cobalamin biosynthesis</keyword>
<keyword id="KW-0328">Glycosyltransferase</keyword>
<keyword id="KW-0808">Transferase</keyword>
<organism>
    <name type="scientific">Shewanella sp. (strain ANA-3)</name>
    <dbReference type="NCBI Taxonomy" id="94122"/>
    <lineage>
        <taxon>Bacteria</taxon>
        <taxon>Pseudomonadati</taxon>
        <taxon>Pseudomonadota</taxon>
        <taxon>Gammaproteobacteria</taxon>
        <taxon>Alteromonadales</taxon>
        <taxon>Shewanellaceae</taxon>
        <taxon>Shewanella</taxon>
    </lineage>
</organism>
<sequence length="350" mass="37010">MPQSVPLFQIEPVSKAQDQLIQQKIDLKTKPPGALGQLESLALQIARIQGAKQLQIVYPTMLVFAGDHGIAAEGVSIAPSEVTRQMVQNFAHGGAAINVFCRQLGFNLEVIDCGILTPVEDAEGIIDQRLGAGTAAIHLEPAMTLACVDKGFAMAQALIERHHQAGCNLVAFGEMGIGNTSSAAAIMAAIMQLDVADCVGRGTGINSETLERKQMLIELALLLHQSAMTGPRQVLACLGGFEIVQMTGAMLAAAERKMLVVVDGFIATAAALVAVSINANVRDYLIFAHRSEEQGHQRMLEHLKAKPLLSLGLRLGEGTGAALALPLIQAAVNFYNQMASFSDAGIEAVV</sequence>
<protein>
    <recommendedName>
        <fullName evidence="1">Nicotinate-nucleotide--dimethylbenzimidazole phosphoribosyltransferase</fullName>
        <shortName evidence="1">NN:DBI PRT</shortName>
        <ecNumber evidence="1">2.4.2.21</ecNumber>
    </recommendedName>
    <alternativeName>
        <fullName evidence="1">N(1)-alpha-phosphoribosyltransferase</fullName>
    </alternativeName>
</protein>
<gene>
    <name evidence="1" type="primary">cobT</name>
    <name type="ordered locus">Shewana3_3278</name>
</gene>
<evidence type="ECO:0000255" key="1">
    <source>
        <dbReference type="HAMAP-Rule" id="MF_00230"/>
    </source>
</evidence>
<name>COBT_SHESA</name>
<feature type="chain" id="PRO_1000021630" description="Nicotinate-nucleotide--dimethylbenzimidazole phosphoribosyltransferase">
    <location>
        <begin position="1"/>
        <end position="350"/>
    </location>
</feature>
<feature type="active site" description="Proton acceptor" evidence="1">
    <location>
        <position position="317"/>
    </location>
</feature>